<comment type="function">
    <text evidence="1">Catalyzes the attachment of isoleucine to tRNA(Ile). As IleRS can inadvertently accommodate and process structurally similar amino acids such as valine, to avoid such errors it has two additional distinct tRNA(Ile)-dependent editing activities. One activity is designated as 'pretransfer' editing and involves the hydrolysis of activated Val-AMP. The other activity is designated 'posttransfer' editing and involves deacylation of mischarged Val-tRNA(Ile).</text>
</comment>
<comment type="catalytic activity">
    <reaction evidence="1">
        <text>tRNA(Ile) + L-isoleucine + ATP = L-isoleucyl-tRNA(Ile) + AMP + diphosphate</text>
        <dbReference type="Rhea" id="RHEA:11060"/>
        <dbReference type="Rhea" id="RHEA-COMP:9666"/>
        <dbReference type="Rhea" id="RHEA-COMP:9695"/>
        <dbReference type="ChEBI" id="CHEBI:30616"/>
        <dbReference type="ChEBI" id="CHEBI:33019"/>
        <dbReference type="ChEBI" id="CHEBI:58045"/>
        <dbReference type="ChEBI" id="CHEBI:78442"/>
        <dbReference type="ChEBI" id="CHEBI:78528"/>
        <dbReference type="ChEBI" id="CHEBI:456215"/>
        <dbReference type="EC" id="6.1.1.5"/>
    </reaction>
</comment>
<comment type="cofactor">
    <cofactor evidence="1">
        <name>Zn(2+)</name>
        <dbReference type="ChEBI" id="CHEBI:29105"/>
    </cofactor>
    <text evidence="1">Binds 1 zinc ion per subunit.</text>
</comment>
<comment type="subunit">
    <text evidence="1">Monomer.</text>
</comment>
<comment type="subcellular location">
    <subcellularLocation>
        <location evidence="1">Cytoplasm</location>
    </subcellularLocation>
</comment>
<comment type="domain">
    <text evidence="1">IleRS has two distinct active sites: one for aminoacylation and one for editing. The misactivated valine is translocated from the active site to the editing site, which sterically excludes the correctly activated isoleucine. The single editing site contains two valyl binding pockets, one specific for each substrate (Val-AMP or Val-tRNA(Ile)).</text>
</comment>
<comment type="similarity">
    <text evidence="1">Belongs to the class-I aminoacyl-tRNA synthetase family. IleS type 1 subfamily.</text>
</comment>
<proteinExistence type="inferred from homology"/>
<name>SYI_MYCS5</name>
<accession>Q4A5K5</accession>
<evidence type="ECO:0000255" key="1">
    <source>
        <dbReference type="HAMAP-Rule" id="MF_02002"/>
    </source>
</evidence>
<reference key="1">
    <citation type="journal article" date="2005" name="J. Bacteriol.">
        <title>Swine and poultry pathogens: the complete genome sequences of two strains of Mycoplasma hyopneumoniae and a strain of Mycoplasma synoviae.</title>
        <authorList>
            <person name="Vasconcelos A.T.R."/>
            <person name="Ferreira H.B."/>
            <person name="Bizarro C.V."/>
            <person name="Bonatto S.L."/>
            <person name="Carvalho M.O."/>
            <person name="Pinto P.M."/>
            <person name="Almeida D.F."/>
            <person name="Almeida L.G.P."/>
            <person name="Almeida R."/>
            <person name="Alves-Junior L."/>
            <person name="Assuncao E.N."/>
            <person name="Azevedo V.A.C."/>
            <person name="Bogo M.R."/>
            <person name="Brigido M.M."/>
            <person name="Brocchi M."/>
            <person name="Burity H.A."/>
            <person name="Camargo A.A."/>
            <person name="Camargo S.S."/>
            <person name="Carepo M.S."/>
            <person name="Carraro D.M."/>
            <person name="de Mattos Cascardo J.C."/>
            <person name="Castro L.A."/>
            <person name="Cavalcanti G."/>
            <person name="Chemale G."/>
            <person name="Collevatti R.G."/>
            <person name="Cunha C.W."/>
            <person name="Dallagiovanna B."/>
            <person name="Dambros B.P."/>
            <person name="Dellagostin O.A."/>
            <person name="Falcao C."/>
            <person name="Fantinatti-Garboggini F."/>
            <person name="Felipe M.S.S."/>
            <person name="Fiorentin L."/>
            <person name="Franco G.R."/>
            <person name="Freitas N.S.A."/>
            <person name="Frias D."/>
            <person name="Grangeiro T.B."/>
            <person name="Grisard E.C."/>
            <person name="Guimaraes C.T."/>
            <person name="Hungria M."/>
            <person name="Jardim S.N."/>
            <person name="Krieger M.A."/>
            <person name="Laurino J.P."/>
            <person name="Lima L.F.A."/>
            <person name="Lopes M.I."/>
            <person name="Loreto E.L.S."/>
            <person name="Madeira H.M.F."/>
            <person name="Manfio G.P."/>
            <person name="Maranhao A.Q."/>
            <person name="Martinkovics C.T."/>
            <person name="Medeiros S.R.B."/>
            <person name="Moreira M.A.M."/>
            <person name="Neiva M."/>
            <person name="Ramalho-Neto C.E."/>
            <person name="Nicolas M.F."/>
            <person name="Oliveira S.C."/>
            <person name="Paixao R.F.C."/>
            <person name="Pedrosa F.O."/>
            <person name="Pena S.D.J."/>
            <person name="Pereira M."/>
            <person name="Pereira-Ferrari L."/>
            <person name="Piffer I."/>
            <person name="Pinto L.S."/>
            <person name="Potrich D.P."/>
            <person name="Salim A.C.M."/>
            <person name="Santos F.R."/>
            <person name="Schmitt R."/>
            <person name="Schneider M.P.C."/>
            <person name="Schrank A."/>
            <person name="Schrank I.S."/>
            <person name="Schuck A.F."/>
            <person name="Seuanez H.N."/>
            <person name="Silva D.W."/>
            <person name="Silva R."/>
            <person name="Silva S.C."/>
            <person name="Soares C.M.A."/>
            <person name="Souza K.R.L."/>
            <person name="Souza R.C."/>
            <person name="Staats C.C."/>
            <person name="Steffens M.B.R."/>
            <person name="Teixeira S.M.R."/>
            <person name="Urmenyi T.P."/>
            <person name="Vainstein M.H."/>
            <person name="Zuccherato L.W."/>
            <person name="Simpson A.J.G."/>
            <person name="Zaha A."/>
        </authorList>
    </citation>
    <scope>NUCLEOTIDE SEQUENCE [LARGE SCALE GENOMIC DNA]</scope>
    <source>
        <strain>53</strain>
    </source>
</reference>
<feature type="chain" id="PRO_0000098426" description="Isoleucine--tRNA ligase">
    <location>
        <begin position="1"/>
        <end position="897"/>
    </location>
</feature>
<feature type="short sequence motif" description="'HIGH' region">
    <location>
        <begin position="59"/>
        <end position="69"/>
    </location>
</feature>
<feature type="short sequence motif" description="'KMSKS' region">
    <location>
        <begin position="594"/>
        <end position="598"/>
    </location>
</feature>
<feature type="binding site" evidence="1">
    <location>
        <position position="553"/>
    </location>
    <ligand>
        <name>L-isoleucyl-5'-AMP</name>
        <dbReference type="ChEBI" id="CHEBI:178002"/>
    </ligand>
</feature>
<feature type="binding site" evidence="1">
    <location>
        <position position="597"/>
    </location>
    <ligand>
        <name>ATP</name>
        <dbReference type="ChEBI" id="CHEBI:30616"/>
    </ligand>
</feature>
<feature type="binding site" evidence="1">
    <location>
        <position position="866"/>
    </location>
    <ligand>
        <name>Zn(2+)</name>
        <dbReference type="ChEBI" id="CHEBI:29105"/>
    </ligand>
</feature>
<feature type="binding site" evidence="1">
    <location>
        <position position="869"/>
    </location>
    <ligand>
        <name>Zn(2+)</name>
        <dbReference type="ChEBI" id="CHEBI:29105"/>
    </ligand>
</feature>
<feature type="binding site" evidence="1">
    <location>
        <position position="883"/>
    </location>
    <ligand>
        <name>Zn(2+)</name>
        <dbReference type="ChEBI" id="CHEBI:29105"/>
    </ligand>
</feature>
<feature type="binding site" evidence="1">
    <location>
        <position position="886"/>
    </location>
    <ligand>
        <name>Zn(2+)</name>
        <dbReference type="ChEBI" id="CHEBI:29105"/>
    </ligand>
</feature>
<gene>
    <name evidence="1" type="primary">ileS</name>
    <name type="ordered locus">MS53_0558</name>
</gene>
<dbReference type="EC" id="6.1.1.5" evidence="1"/>
<dbReference type="EMBL" id="AE017245">
    <property type="protein sequence ID" value="AAZ43966.2"/>
    <property type="molecule type" value="Genomic_DNA"/>
</dbReference>
<dbReference type="RefSeq" id="WP_041352082.1">
    <property type="nucleotide sequence ID" value="NC_007294.1"/>
</dbReference>
<dbReference type="SMR" id="Q4A5K5"/>
<dbReference type="STRING" id="262723.MS53_0558"/>
<dbReference type="KEGG" id="msy:MS53_0558"/>
<dbReference type="eggNOG" id="COG0060">
    <property type="taxonomic scope" value="Bacteria"/>
</dbReference>
<dbReference type="HOGENOM" id="CLU_001493_7_1_14"/>
<dbReference type="OrthoDB" id="9810365at2"/>
<dbReference type="Proteomes" id="UP000000549">
    <property type="component" value="Chromosome"/>
</dbReference>
<dbReference type="GO" id="GO:0005829">
    <property type="term" value="C:cytosol"/>
    <property type="evidence" value="ECO:0007669"/>
    <property type="project" value="TreeGrafter"/>
</dbReference>
<dbReference type="GO" id="GO:0002161">
    <property type="term" value="F:aminoacyl-tRNA deacylase activity"/>
    <property type="evidence" value="ECO:0007669"/>
    <property type="project" value="InterPro"/>
</dbReference>
<dbReference type="GO" id="GO:0005524">
    <property type="term" value="F:ATP binding"/>
    <property type="evidence" value="ECO:0007669"/>
    <property type="project" value="UniProtKB-UniRule"/>
</dbReference>
<dbReference type="GO" id="GO:0004822">
    <property type="term" value="F:isoleucine-tRNA ligase activity"/>
    <property type="evidence" value="ECO:0007669"/>
    <property type="project" value="UniProtKB-UniRule"/>
</dbReference>
<dbReference type="GO" id="GO:0000049">
    <property type="term" value="F:tRNA binding"/>
    <property type="evidence" value="ECO:0007669"/>
    <property type="project" value="InterPro"/>
</dbReference>
<dbReference type="GO" id="GO:0008270">
    <property type="term" value="F:zinc ion binding"/>
    <property type="evidence" value="ECO:0007669"/>
    <property type="project" value="UniProtKB-UniRule"/>
</dbReference>
<dbReference type="GO" id="GO:0006428">
    <property type="term" value="P:isoleucyl-tRNA aminoacylation"/>
    <property type="evidence" value="ECO:0007669"/>
    <property type="project" value="UniProtKB-UniRule"/>
</dbReference>
<dbReference type="CDD" id="cd07960">
    <property type="entry name" value="Anticodon_Ia_Ile_BEm"/>
    <property type="match status" value="1"/>
</dbReference>
<dbReference type="CDD" id="cd00818">
    <property type="entry name" value="IleRS_core"/>
    <property type="match status" value="1"/>
</dbReference>
<dbReference type="FunFam" id="3.40.50.620:FF:000152">
    <property type="entry name" value="Isoleucine--tRNA ligase"/>
    <property type="match status" value="1"/>
</dbReference>
<dbReference type="Gene3D" id="1.10.730.20">
    <property type="match status" value="1"/>
</dbReference>
<dbReference type="Gene3D" id="3.40.50.620">
    <property type="entry name" value="HUPs"/>
    <property type="match status" value="2"/>
</dbReference>
<dbReference type="Gene3D" id="1.10.10.830">
    <property type="entry name" value="Ile-tRNA synthetase CP2 domain-like"/>
    <property type="match status" value="1"/>
</dbReference>
<dbReference type="HAMAP" id="MF_02002">
    <property type="entry name" value="Ile_tRNA_synth_type1"/>
    <property type="match status" value="1"/>
</dbReference>
<dbReference type="InterPro" id="IPR001412">
    <property type="entry name" value="aa-tRNA-synth_I_CS"/>
</dbReference>
<dbReference type="InterPro" id="IPR002300">
    <property type="entry name" value="aa-tRNA-synth_Ia"/>
</dbReference>
<dbReference type="InterPro" id="IPR033708">
    <property type="entry name" value="Anticodon_Ile_BEm"/>
</dbReference>
<dbReference type="InterPro" id="IPR002301">
    <property type="entry name" value="Ile-tRNA-ligase"/>
</dbReference>
<dbReference type="InterPro" id="IPR023585">
    <property type="entry name" value="Ile-tRNA-ligase_type1"/>
</dbReference>
<dbReference type="InterPro" id="IPR050081">
    <property type="entry name" value="Ile-tRNA_ligase"/>
</dbReference>
<dbReference type="InterPro" id="IPR013155">
    <property type="entry name" value="M/V/L/I-tRNA-synth_anticd-bd"/>
</dbReference>
<dbReference type="InterPro" id="IPR014729">
    <property type="entry name" value="Rossmann-like_a/b/a_fold"/>
</dbReference>
<dbReference type="InterPro" id="IPR009080">
    <property type="entry name" value="tRNAsynth_Ia_anticodon-bd"/>
</dbReference>
<dbReference type="InterPro" id="IPR009008">
    <property type="entry name" value="Val/Leu/Ile-tRNA-synth_edit"/>
</dbReference>
<dbReference type="InterPro" id="IPR010663">
    <property type="entry name" value="Znf_FPG/IleRS"/>
</dbReference>
<dbReference type="NCBIfam" id="TIGR00392">
    <property type="entry name" value="ileS"/>
    <property type="match status" value="1"/>
</dbReference>
<dbReference type="PANTHER" id="PTHR42765:SF1">
    <property type="entry name" value="ISOLEUCINE--TRNA LIGASE, MITOCHONDRIAL"/>
    <property type="match status" value="1"/>
</dbReference>
<dbReference type="PANTHER" id="PTHR42765">
    <property type="entry name" value="SOLEUCYL-TRNA SYNTHETASE"/>
    <property type="match status" value="1"/>
</dbReference>
<dbReference type="Pfam" id="PF08264">
    <property type="entry name" value="Anticodon_1"/>
    <property type="match status" value="1"/>
</dbReference>
<dbReference type="Pfam" id="PF00133">
    <property type="entry name" value="tRNA-synt_1"/>
    <property type="match status" value="1"/>
</dbReference>
<dbReference type="Pfam" id="PF06827">
    <property type="entry name" value="zf-FPG_IleRS"/>
    <property type="match status" value="1"/>
</dbReference>
<dbReference type="PRINTS" id="PR00984">
    <property type="entry name" value="TRNASYNTHILE"/>
</dbReference>
<dbReference type="SUPFAM" id="SSF47323">
    <property type="entry name" value="Anticodon-binding domain of a subclass of class I aminoacyl-tRNA synthetases"/>
    <property type="match status" value="1"/>
</dbReference>
<dbReference type="SUPFAM" id="SSF52374">
    <property type="entry name" value="Nucleotidylyl transferase"/>
    <property type="match status" value="1"/>
</dbReference>
<dbReference type="SUPFAM" id="SSF50677">
    <property type="entry name" value="ValRS/IleRS/LeuRS editing domain"/>
    <property type="match status" value="1"/>
</dbReference>
<dbReference type="PROSITE" id="PS00178">
    <property type="entry name" value="AA_TRNA_LIGASE_I"/>
    <property type="match status" value="1"/>
</dbReference>
<sequence length="897" mass="104509">MSLDFKKTLNMPSTKFDMKANLVEKEPLFRKKWLEDDIYQKVLKNNANNERFVVHDGPPYANGDIHVGHALNKILKDIIVRYKSLQGYYSPFVPGWDTHGLPIEHKMLTESKLDRDQITVELLRKKSRNYALKQIEHQKKQFQKLQLFSDFSKIYITLDKSYEAKQLKVFKKLALDGLVYKGLKPIYWSPSSQSALAEAEVEYETVTTNSIYVSFDVTKSTFNKVPVGSKLVVWTTTPWTLIANAAVAISFDITYLTVKYQDSLYVVAKNLFYNDLLEKFQWENYEVVDEFLGKEMPRNSIWYKAPLLDFDAPVIATNYVLEDSGTGLVHSAPLFGEDDFSLTFDNDLKLIMHISDTGHIENSQTKYDSLFYEEANKEIIKDLAEKVVHVYTYSHSYPHDWRTKKPIIYRATPQWFVSIDKVRSKIVSELQNKVKTFPEWSKNRMISMIENRGDWTISRQRTWGVPIIIFYDENEKPVINEEIFDHVIDLVANHGTDIWFSSTVDELLPEKYRNRNWTKENDIMDVWFDSGVSSIAVDIDGGKTTLPFDVYLEGNDQFRGWFNSSVINAVAYAGVSPYINLVSHGFALDGQGKKMSKSRNNVVDPLDVIKKYGADILRLWVANSEYSSDVHISESILVQNSEIYRKIRNTVKFLLGNLNNFKYDKDLKLTSIHHYINEELKSVKKEVLENYDKFRFINVIKVLNRYVIDLSSFYFSVTKDILYIRKENDEERQMVLKNFYEILDFLMLALAPIIPTTADEMYSYFNKENKKESLFLERLEKAGDVSFDEKVLEQFKEFFELRDQVNILIENQIQNKVIKRSNELELVLPETASEFLKSLDLKTLLMVSKISYGKTLQVVKFESEKCKRCWNHFASLNKEYEICDLCFSVLKDTLANA</sequence>
<organism>
    <name type="scientific">Mycoplasmopsis synoviae (strain 53)</name>
    <name type="common">Mycoplasma synoviae</name>
    <dbReference type="NCBI Taxonomy" id="262723"/>
    <lineage>
        <taxon>Bacteria</taxon>
        <taxon>Bacillati</taxon>
        <taxon>Mycoplasmatota</taxon>
        <taxon>Mycoplasmoidales</taxon>
        <taxon>Metamycoplasmataceae</taxon>
        <taxon>Mycoplasmopsis</taxon>
    </lineage>
</organism>
<keyword id="KW-0030">Aminoacyl-tRNA synthetase</keyword>
<keyword id="KW-0067">ATP-binding</keyword>
<keyword id="KW-0963">Cytoplasm</keyword>
<keyword id="KW-0436">Ligase</keyword>
<keyword id="KW-0479">Metal-binding</keyword>
<keyword id="KW-0547">Nucleotide-binding</keyword>
<keyword id="KW-0648">Protein biosynthesis</keyword>
<keyword id="KW-1185">Reference proteome</keyword>
<keyword id="KW-0862">Zinc</keyword>
<protein>
    <recommendedName>
        <fullName evidence="1">Isoleucine--tRNA ligase</fullName>
        <ecNumber evidence="1">6.1.1.5</ecNumber>
    </recommendedName>
    <alternativeName>
        <fullName evidence="1">Isoleucyl-tRNA synthetase</fullName>
        <shortName evidence="1">IleRS</shortName>
    </alternativeName>
</protein>